<accession>Q9ZDF2</accession>
<gene>
    <name type="primary">tlcB</name>
    <name type="synonym">tlc2</name>
    <name type="ordered locus">RP377</name>
</gene>
<dbReference type="EMBL" id="AJ235271">
    <property type="protein sequence ID" value="CAA14836.1"/>
    <property type="molecule type" value="Genomic_DNA"/>
</dbReference>
<dbReference type="PIR" id="B71695">
    <property type="entry name" value="B71695"/>
</dbReference>
<dbReference type="RefSeq" id="NP_220760.1">
    <property type="nucleotide sequence ID" value="NC_000963.1"/>
</dbReference>
<dbReference type="RefSeq" id="WP_004597535.1">
    <property type="nucleotide sequence ID" value="NC_000963.1"/>
</dbReference>
<dbReference type="STRING" id="272947.gene:17555457"/>
<dbReference type="EnsemblBacteria" id="CAA14836">
    <property type="protein sequence ID" value="CAA14836"/>
    <property type="gene ID" value="CAA14836"/>
</dbReference>
<dbReference type="KEGG" id="rpr:RP377"/>
<dbReference type="PATRIC" id="fig|272947.5.peg.389"/>
<dbReference type="eggNOG" id="COG3202">
    <property type="taxonomic scope" value="Bacteria"/>
</dbReference>
<dbReference type="HOGENOM" id="CLU_023964_0_1_5"/>
<dbReference type="OrthoDB" id="19786at2"/>
<dbReference type="Proteomes" id="UP000002480">
    <property type="component" value="Chromosome"/>
</dbReference>
<dbReference type="GO" id="GO:0005886">
    <property type="term" value="C:plasma membrane"/>
    <property type="evidence" value="ECO:0007669"/>
    <property type="project" value="UniProtKB-SubCell"/>
</dbReference>
<dbReference type="GO" id="GO:0005524">
    <property type="term" value="F:ATP binding"/>
    <property type="evidence" value="ECO:0007669"/>
    <property type="project" value="UniProtKB-KW"/>
</dbReference>
<dbReference type="GO" id="GO:0005471">
    <property type="term" value="F:ATP:ADP antiporter activity"/>
    <property type="evidence" value="ECO:0007669"/>
    <property type="project" value="InterPro"/>
</dbReference>
<dbReference type="InterPro" id="IPR004667">
    <property type="entry name" value="ADP_ATP_car_bac_type"/>
</dbReference>
<dbReference type="NCBIfam" id="TIGR00769">
    <property type="entry name" value="AAA"/>
    <property type="match status" value="1"/>
</dbReference>
<dbReference type="PANTHER" id="PTHR31187">
    <property type="match status" value="1"/>
</dbReference>
<dbReference type="PANTHER" id="PTHR31187:SF1">
    <property type="entry name" value="ADP,ATP CARRIER PROTEIN 1"/>
    <property type="match status" value="1"/>
</dbReference>
<dbReference type="Pfam" id="PF03219">
    <property type="entry name" value="TLC"/>
    <property type="match status" value="1"/>
</dbReference>
<evidence type="ECO:0000255" key="1"/>
<evidence type="ECO:0000305" key="2"/>
<proteinExistence type="inferred from homology"/>
<feature type="chain" id="PRO_0000102581" description="ADP,ATP carrier protein 2">
    <location>
        <begin position="1"/>
        <end position="507"/>
    </location>
</feature>
<feature type="transmembrane region" description="Helical" evidence="1">
    <location>
        <begin position="31"/>
        <end position="51"/>
    </location>
</feature>
<feature type="transmembrane region" description="Helical" evidence="1">
    <location>
        <begin position="67"/>
        <end position="87"/>
    </location>
</feature>
<feature type="transmembrane region" description="Helical" evidence="1">
    <location>
        <begin position="99"/>
        <end position="119"/>
    </location>
</feature>
<feature type="transmembrane region" description="Helical" evidence="1">
    <location>
        <begin position="130"/>
        <end position="150"/>
    </location>
</feature>
<feature type="transmembrane region" description="Helical" evidence="1">
    <location>
        <begin position="154"/>
        <end position="174"/>
    </location>
</feature>
<feature type="transmembrane region" description="Helical" evidence="1">
    <location>
        <begin position="192"/>
        <end position="212"/>
    </location>
</feature>
<feature type="transmembrane region" description="Helical" evidence="1">
    <location>
        <begin position="231"/>
        <end position="251"/>
    </location>
</feature>
<feature type="transmembrane region" description="Helical" evidence="1">
    <location>
        <begin position="292"/>
        <end position="312"/>
    </location>
</feature>
<feature type="transmembrane region" description="Helical" evidence="1">
    <location>
        <begin position="333"/>
        <end position="353"/>
    </location>
</feature>
<feature type="transmembrane region" description="Helical" evidence="1">
    <location>
        <begin position="357"/>
        <end position="377"/>
    </location>
</feature>
<feature type="transmembrane region" description="Helical" evidence="1">
    <location>
        <begin position="393"/>
        <end position="413"/>
    </location>
</feature>
<feature type="transmembrane region" description="Helical" evidence="1">
    <location>
        <begin position="451"/>
        <end position="471"/>
    </location>
</feature>
<feature type="transmembrane region" description="Helical" evidence="1">
    <location>
        <begin position="474"/>
        <end position="494"/>
    </location>
</feature>
<reference key="1">
    <citation type="journal article" date="1998" name="Nature">
        <title>The genome sequence of Rickettsia prowazekii and the origin of mitochondria.</title>
        <authorList>
            <person name="Andersson S.G.E."/>
            <person name="Zomorodipour A."/>
            <person name="Andersson J.O."/>
            <person name="Sicheritz-Ponten T."/>
            <person name="Alsmark U.C.M."/>
            <person name="Podowski R.M."/>
            <person name="Naeslund A.K."/>
            <person name="Eriksson A.-S."/>
            <person name="Winkler H.H."/>
            <person name="Kurland C.G."/>
        </authorList>
    </citation>
    <scope>NUCLEOTIDE SEQUENCE [LARGE SCALE GENOMIC DNA]</scope>
    <source>
        <strain>Madrid E</strain>
    </source>
</reference>
<protein>
    <recommendedName>
        <fullName>ADP,ATP carrier protein 2</fullName>
    </recommendedName>
    <alternativeName>
        <fullName>ADP/ATP translocase 2</fullName>
    </alternativeName>
</protein>
<organism>
    <name type="scientific">Rickettsia prowazekii (strain Madrid E)</name>
    <dbReference type="NCBI Taxonomy" id="272947"/>
    <lineage>
        <taxon>Bacteria</taxon>
        <taxon>Pseudomonadati</taxon>
        <taxon>Pseudomonadota</taxon>
        <taxon>Alphaproteobacteria</taxon>
        <taxon>Rickettsiales</taxon>
        <taxon>Rickettsiaceae</taxon>
        <taxon>Rickettsieae</taxon>
        <taxon>Rickettsia</taxon>
        <taxon>typhus group</taxon>
    </lineage>
</organism>
<name>TLCB_RICPR</name>
<comment type="function">
    <text>Provides the rickettsial cell with host ATP in exchange for rickettsial ADP. This is an obligate exchange system. This energy acquiring activity is an important component of rickettsial parasitism.</text>
</comment>
<comment type="subcellular location">
    <subcellularLocation>
        <location>Cell membrane</location>
        <topology>Multi-pass membrane protein</topology>
    </subcellularLocation>
</comment>
<comment type="similarity">
    <text evidence="2">Belongs to the ADP/ATP translocase tlc family.</text>
</comment>
<sequence length="507" mass="58457">MNIVDSNCTIWHKARNSKFRHIVWPIRSYELTKFIPMTLLMFFILLNQNLVRSIKDSFVVTLISSEVLSFIKLWGEMPMGVLFVILYSKLCNIMTTEQVFRIITSTFLFFFAIFGFILFPYKEFFHPNPELINQYIIVLPHLKWFLIIWGQWSLVLFYIMGELWPVIVFTLLYWQLANKITKVEEAPRFYSFFTLFGQTNLLFSGTVIIYFAKSEHFLLPLFAHLNDTNEILLKSFITVILISGLICLALHKLIDKSVVEADKNIKFKNQRTDILKLSLLESAKIILTSRYLGFICLLVMSYSMSINLIEGLWMSKVKQLYPATKDFISYHGEVLFWTGVLTLVSAFLGSSLIRIYGWFWGAIITPIMMFVAGVMFFSFTIFEQHLGNIVNTLGYSSPLVIIVFIGGLWHVFAKSVKYSLFDATKEMVYIPLDNEIKTKGKAAVDVMGAKIGKSIGAIIQFISFSIFPNAVHNDIAGLLMVTFIIVCILWLYGVKVLSQNYNKMIKR</sequence>
<keyword id="KW-0067">ATP-binding</keyword>
<keyword id="KW-1003">Cell membrane</keyword>
<keyword id="KW-0472">Membrane</keyword>
<keyword id="KW-0547">Nucleotide-binding</keyword>
<keyword id="KW-1185">Reference proteome</keyword>
<keyword id="KW-0812">Transmembrane</keyword>
<keyword id="KW-1133">Transmembrane helix</keyword>
<keyword id="KW-0813">Transport</keyword>